<keyword id="KW-0963">Cytoplasm</keyword>
<keyword id="KW-0238">DNA-binding</keyword>
<keyword id="KW-0479">Metal-binding</keyword>
<keyword id="KW-0539">Nucleus</keyword>
<keyword id="KW-0597">Phosphoprotein</keyword>
<keyword id="KW-1185">Reference proteome</keyword>
<keyword id="KW-0677">Repeat</keyword>
<keyword id="KW-0804">Transcription</keyword>
<keyword id="KW-0805">Transcription regulation</keyword>
<keyword id="KW-0862">Zinc</keyword>
<keyword id="KW-0863">Zinc-finger</keyword>
<dbReference type="EMBL" id="CU329670">
    <property type="protein sequence ID" value="CAA91214.1"/>
    <property type="molecule type" value="Genomic_DNA"/>
</dbReference>
<dbReference type="PIR" id="T38858">
    <property type="entry name" value="S62490"/>
</dbReference>
<dbReference type="RefSeq" id="NP_593073.1">
    <property type="nucleotide sequence ID" value="NM_001018471.2"/>
</dbReference>
<dbReference type="SMR" id="Q09838"/>
<dbReference type="BioGRID" id="278297">
    <property type="interactions" value="370"/>
</dbReference>
<dbReference type="FunCoup" id="Q09838">
    <property type="interactions" value="270"/>
</dbReference>
<dbReference type="STRING" id="284812.Q09838"/>
<dbReference type="iPTMnet" id="Q09838"/>
<dbReference type="PaxDb" id="4896-SPAC4G8.13c.1"/>
<dbReference type="EnsemblFungi" id="SPAC4G8.13c.1">
    <property type="protein sequence ID" value="SPAC4G8.13c.1:pep"/>
    <property type="gene ID" value="SPAC4G8.13c"/>
</dbReference>
<dbReference type="GeneID" id="2541806"/>
<dbReference type="KEGG" id="spo:2541806"/>
<dbReference type="PomBase" id="SPAC4G8.13c">
    <property type="gene designation" value="prz1"/>
</dbReference>
<dbReference type="VEuPathDB" id="FungiDB:SPAC4G8.13c"/>
<dbReference type="eggNOG" id="KOG1721">
    <property type="taxonomic scope" value="Eukaryota"/>
</dbReference>
<dbReference type="HOGENOM" id="CLU_403405_0_0_1"/>
<dbReference type="InParanoid" id="Q09838"/>
<dbReference type="OMA" id="MNTHTNY"/>
<dbReference type="Reactome" id="R-SPO-3214841">
    <property type="pathway name" value="PKMTs methylate histone lysines"/>
</dbReference>
<dbReference type="Reactome" id="R-SPO-8951664">
    <property type="pathway name" value="Neddylation"/>
</dbReference>
<dbReference type="Reactome" id="R-SPO-983168">
    <property type="pathway name" value="Antigen processing: Ubiquitination &amp; Proteasome degradation"/>
</dbReference>
<dbReference type="PRO" id="PR:Q09838"/>
<dbReference type="Proteomes" id="UP000002485">
    <property type="component" value="Chromosome I"/>
</dbReference>
<dbReference type="GO" id="GO:0005737">
    <property type="term" value="C:cytoplasm"/>
    <property type="evidence" value="ECO:0000314"/>
    <property type="project" value="PomBase"/>
</dbReference>
<dbReference type="GO" id="GO:0005829">
    <property type="term" value="C:cytosol"/>
    <property type="evidence" value="ECO:0000314"/>
    <property type="project" value="PomBase"/>
</dbReference>
<dbReference type="GO" id="GO:0005634">
    <property type="term" value="C:nucleus"/>
    <property type="evidence" value="ECO:0000314"/>
    <property type="project" value="PomBase"/>
</dbReference>
<dbReference type="GO" id="GO:0071889">
    <property type="term" value="F:14-3-3 protein binding"/>
    <property type="evidence" value="ECO:0000353"/>
    <property type="project" value="PomBase"/>
</dbReference>
<dbReference type="GO" id="GO:0001228">
    <property type="term" value="F:DNA-binding transcription activator activity, RNA polymerase II-specific"/>
    <property type="evidence" value="ECO:0000314"/>
    <property type="project" value="PomBase"/>
</dbReference>
<dbReference type="GO" id="GO:0000978">
    <property type="term" value="F:RNA polymerase II cis-regulatory region sequence-specific DNA binding"/>
    <property type="evidence" value="ECO:0000314"/>
    <property type="project" value="PomBase"/>
</dbReference>
<dbReference type="GO" id="GO:0008270">
    <property type="term" value="F:zinc ion binding"/>
    <property type="evidence" value="ECO:0007669"/>
    <property type="project" value="UniProtKB-KW"/>
</dbReference>
<dbReference type="GO" id="GO:0097720">
    <property type="term" value="P:calcineurin-mediated signaling"/>
    <property type="evidence" value="ECO:0000315"/>
    <property type="project" value="PomBase"/>
</dbReference>
<dbReference type="GO" id="GO:0019722">
    <property type="term" value="P:calcium-mediated signaling"/>
    <property type="evidence" value="ECO:0000314"/>
    <property type="project" value="PomBase"/>
</dbReference>
<dbReference type="GO" id="GO:0071277">
    <property type="term" value="P:cellular response to calcium ion"/>
    <property type="evidence" value="ECO:0000315"/>
    <property type="project" value="PomBase"/>
</dbReference>
<dbReference type="GO" id="GO:0006874">
    <property type="term" value="P:intracellular calcium ion homeostasis"/>
    <property type="evidence" value="ECO:0000314"/>
    <property type="project" value="PomBase"/>
</dbReference>
<dbReference type="GO" id="GO:0006357">
    <property type="term" value="P:regulation of transcription by RNA polymerase II"/>
    <property type="evidence" value="ECO:0000318"/>
    <property type="project" value="GO_Central"/>
</dbReference>
<dbReference type="FunFam" id="3.30.160.60:FF:000125">
    <property type="entry name" value="Putative zinc finger protein 143"/>
    <property type="match status" value="1"/>
</dbReference>
<dbReference type="FunFam" id="3.30.160.60:FF:000145">
    <property type="entry name" value="Zinc finger protein 574"/>
    <property type="match status" value="1"/>
</dbReference>
<dbReference type="Gene3D" id="3.30.160.60">
    <property type="entry name" value="Classic Zinc Finger"/>
    <property type="match status" value="3"/>
</dbReference>
<dbReference type="InterPro" id="IPR036236">
    <property type="entry name" value="Znf_C2H2_sf"/>
</dbReference>
<dbReference type="InterPro" id="IPR013087">
    <property type="entry name" value="Znf_C2H2_type"/>
</dbReference>
<dbReference type="PANTHER" id="PTHR23235">
    <property type="entry name" value="KRUEPPEL-LIKE TRANSCRIPTION FACTOR"/>
    <property type="match status" value="1"/>
</dbReference>
<dbReference type="PANTHER" id="PTHR23235:SF120">
    <property type="entry name" value="KRUPPEL-LIKE FACTOR 15"/>
    <property type="match status" value="1"/>
</dbReference>
<dbReference type="Pfam" id="PF00096">
    <property type="entry name" value="zf-C2H2"/>
    <property type="match status" value="2"/>
</dbReference>
<dbReference type="SMART" id="SM00355">
    <property type="entry name" value="ZnF_C2H2"/>
    <property type="match status" value="3"/>
</dbReference>
<dbReference type="SUPFAM" id="SSF57667">
    <property type="entry name" value="beta-beta-alpha zinc fingers"/>
    <property type="match status" value="2"/>
</dbReference>
<dbReference type="PROSITE" id="PS00028">
    <property type="entry name" value="ZINC_FINGER_C2H2_1"/>
    <property type="match status" value="2"/>
</dbReference>
<dbReference type="PROSITE" id="PS50157">
    <property type="entry name" value="ZINC_FINGER_C2H2_2"/>
    <property type="match status" value="3"/>
</dbReference>
<gene>
    <name type="primary">prz1</name>
    <name type="ORF">SPAC4G8.13c</name>
</gene>
<proteinExistence type="evidence at protein level"/>
<comment type="function">
    <text evidence="3">Involved in the regulation of calcium ion homeostasis. Binds to the calcineurin-dependent response element. Transcriptionally regulates pmc1.</text>
</comment>
<comment type="subcellular location">
    <subcellularLocation>
        <location evidence="3">Nucleus</location>
    </subcellularLocation>
    <subcellularLocation>
        <location evidence="3">Cytoplasm</location>
    </subcellularLocation>
</comment>
<comment type="PTM">
    <text evidence="3 4">Phosphorylated. Dephosphorylated by calcineurin which leads to rapid translocation from the cytoplasm to the nucleus.</text>
</comment>
<comment type="similarity">
    <text evidence="5">Belongs to the EGR C2H2-type zinc-finger protein family.</text>
</comment>
<feature type="chain" id="PRO_0000046814" description="Transcriptional regulator prz1">
    <location>
        <begin position="1"/>
        <end position="681"/>
    </location>
</feature>
<feature type="zinc finger region" description="C2H2-type 1" evidence="1">
    <location>
        <begin position="570"/>
        <end position="594"/>
    </location>
</feature>
<feature type="zinc finger region" description="C2H2-type 2" evidence="1">
    <location>
        <begin position="600"/>
        <end position="622"/>
    </location>
</feature>
<feature type="zinc finger region" description="C2H2-type 3; degenerate" evidence="1">
    <location>
        <begin position="628"/>
        <end position="650"/>
    </location>
</feature>
<feature type="region of interest" description="Disordered" evidence="2">
    <location>
        <begin position="1"/>
        <end position="29"/>
    </location>
</feature>
<feature type="region of interest" description="Disordered" evidence="2">
    <location>
        <begin position="66"/>
        <end position="96"/>
    </location>
</feature>
<feature type="region of interest" description="Disordered" evidence="2">
    <location>
        <begin position="340"/>
        <end position="372"/>
    </location>
</feature>
<feature type="region of interest" description="Disordered" evidence="2">
    <location>
        <begin position="410"/>
        <end position="433"/>
    </location>
</feature>
<feature type="region of interest" description="Disordered" evidence="2">
    <location>
        <begin position="520"/>
        <end position="563"/>
    </location>
</feature>
<feature type="region of interest" description="Disordered" evidence="2">
    <location>
        <begin position="662"/>
        <end position="681"/>
    </location>
</feature>
<feature type="compositionally biased region" description="Basic and acidic residues" evidence="2">
    <location>
        <begin position="1"/>
        <end position="15"/>
    </location>
</feature>
<feature type="compositionally biased region" description="Polar residues" evidence="2">
    <location>
        <begin position="66"/>
        <end position="86"/>
    </location>
</feature>
<feature type="compositionally biased region" description="Polar residues" evidence="2">
    <location>
        <begin position="340"/>
        <end position="358"/>
    </location>
</feature>
<feature type="compositionally biased region" description="Low complexity" evidence="2">
    <location>
        <begin position="416"/>
        <end position="428"/>
    </location>
</feature>
<feature type="compositionally biased region" description="Polar residues" evidence="2">
    <location>
        <begin position="528"/>
        <end position="549"/>
    </location>
</feature>
<feature type="compositionally biased region" description="Low complexity" evidence="2">
    <location>
        <begin position="550"/>
        <end position="559"/>
    </location>
</feature>
<feature type="modified residue" description="Phosphoserine" evidence="4">
    <location>
        <position position="543"/>
    </location>
</feature>
<feature type="modified residue" description="Phosphoserine" evidence="4">
    <location>
        <position position="546"/>
    </location>
</feature>
<accession>Q09838</accession>
<evidence type="ECO:0000255" key="1">
    <source>
        <dbReference type="PROSITE-ProRule" id="PRU00042"/>
    </source>
</evidence>
<evidence type="ECO:0000256" key="2">
    <source>
        <dbReference type="SAM" id="MobiDB-lite"/>
    </source>
</evidence>
<evidence type="ECO:0000269" key="3">
    <source>
    </source>
</evidence>
<evidence type="ECO:0000269" key="4">
    <source>
    </source>
</evidence>
<evidence type="ECO:0000305" key="5"/>
<reference key="1">
    <citation type="journal article" date="2002" name="Nature">
        <title>The genome sequence of Schizosaccharomyces pombe.</title>
        <authorList>
            <person name="Wood V."/>
            <person name="Gwilliam R."/>
            <person name="Rajandream M.A."/>
            <person name="Lyne M.H."/>
            <person name="Lyne R."/>
            <person name="Stewart A."/>
            <person name="Sgouros J.G."/>
            <person name="Peat N."/>
            <person name="Hayles J."/>
            <person name="Baker S.G."/>
            <person name="Basham D."/>
            <person name="Bowman S."/>
            <person name="Brooks K."/>
            <person name="Brown D."/>
            <person name="Brown S."/>
            <person name="Chillingworth T."/>
            <person name="Churcher C.M."/>
            <person name="Collins M."/>
            <person name="Connor R."/>
            <person name="Cronin A."/>
            <person name="Davis P."/>
            <person name="Feltwell T."/>
            <person name="Fraser A."/>
            <person name="Gentles S."/>
            <person name="Goble A."/>
            <person name="Hamlin N."/>
            <person name="Harris D.E."/>
            <person name="Hidalgo J."/>
            <person name="Hodgson G."/>
            <person name="Holroyd S."/>
            <person name="Hornsby T."/>
            <person name="Howarth S."/>
            <person name="Huckle E.J."/>
            <person name="Hunt S."/>
            <person name="Jagels K."/>
            <person name="James K.D."/>
            <person name="Jones L."/>
            <person name="Jones M."/>
            <person name="Leather S."/>
            <person name="McDonald S."/>
            <person name="McLean J."/>
            <person name="Mooney P."/>
            <person name="Moule S."/>
            <person name="Mungall K.L."/>
            <person name="Murphy L.D."/>
            <person name="Niblett D."/>
            <person name="Odell C."/>
            <person name="Oliver K."/>
            <person name="O'Neil S."/>
            <person name="Pearson D."/>
            <person name="Quail M.A."/>
            <person name="Rabbinowitsch E."/>
            <person name="Rutherford K.M."/>
            <person name="Rutter S."/>
            <person name="Saunders D."/>
            <person name="Seeger K."/>
            <person name="Sharp S."/>
            <person name="Skelton J."/>
            <person name="Simmonds M.N."/>
            <person name="Squares R."/>
            <person name="Squares S."/>
            <person name="Stevens K."/>
            <person name="Taylor K."/>
            <person name="Taylor R.G."/>
            <person name="Tivey A."/>
            <person name="Walsh S.V."/>
            <person name="Warren T."/>
            <person name="Whitehead S."/>
            <person name="Woodward J.R."/>
            <person name="Volckaert G."/>
            <person name="Aert R."/>
            <person name="Robben J."/>
            <person name="Grymonprez B."/>
            <person name="Weltjens I."/>
            <person name="Vanstreels E."/>
            <person name="Rieger M."/>
            <person name="Schaefer M."/>
            <person name="Mueller-Auer S."/>
            <person name="Gabel C."/>
            <person name="Fuchs M."/>
            <person name="Duesterhoeft A."/>
            <person name="Fritzc C."/>
            <person name="Holzer E."/>
            <person name="Moestl D."/>
            <person name="Hilbert H."/>
            <person name="Borzym K."/>
            <person name="Langer I."/>
            <person name="Beck A."/>
            <person name="Lehrach H."/>
            <person name="Reinhardt R."/>
            <person name="Pohl T.M."/>
            <person name="Eger P."/>
            <person name="Zimmermann W."/>
            <person name="Wedler H."/>
            <person name="Wambutt R."/>
            <person name="Purnelle B."/>
            <person name="Goffeau A."/>
            <person name="Cadieu E."/>
            <person name="Dreano S."/>
            <person name="Gloux S."/>
            <person name="Lelaure V."/>
            <person name="Mottier S."/>
            <person name="Galibert F."/>
            <person name="Aves S.J."/>
            <person name="Xiang Z."/>
            <person name="Hunt C."/>
            <person name="Moore K."/>
            <person name="Hurst S.M."/>
            <person name="Lucas M."/>
            <person name="Rochet M."/>
            <person name="Gaillardin C."/>
            <person name="Tallada V.A."/>
            <person name="Garzon A."/>
            <person name="Thode G."/>
            <person name="Daga R.R."/>
            <person name="Cruzado L."/>
            <person name="Jimenez J."/>
            <person name="Sanchez M."/>
            <person name="del Rey F."/>
            <person name="Benito J."/>
            <person name="Dominguez A."/>
            <person name="Revuelta J.L."/>
            <person name="Moreno S."/>
            <person name="Armstrong J."/>
            <person name="Forsburg S.L."/>
            <person name="Cerutti L."/>
            <person name="Lowe T."/>
            <person name="McCombie W.R."/>
            <person name="Paulsen I."/>
            <person name="Potashkin J."/>
            <person name="Shpakovski G.V."/>
            <person name="Ussery D."/>
            <person name="Barrell B.G."/>
            <person name="Nurse P."/>
        </authorList>
    </citation>
    <scope>NUCLEOTIDE SEQUENCE [LARGE SCALE GENOMIC DNA]</scope>
    <source>
        <strain>972 / ATCC 24843</strain>
    </source>
</reference>
<reference key="2">
    <citation type="journal article" date="2003" name="J. Biol. Chem.">
        <title>Zinc finger protein Prz1 regulates Ca2+ but not Cl- homeostasis in fission yeast. Identification of distinct branches of calcineurin signaling pathway in fission yeast.</title>
        <authorList>
            <person name="Hirayama S."/>
            <person name="Sugiura R."/>
            <person name="Lu Y."/>
            <person name="Maeda T."/>
            <person name="Kawagishi K."/>
            <person name="Yokoyama M."/>
            <person name="Tohda H."/>
            <person name="Giga-Hama Y."/>
            <person name="Shuntoh H."/>
            <person name="Kuno T."/>
        </authorList>
    </citation>
    <scope>FUNCTION</scope>
    <scope>SUBCELLULAR LOCATION</scope>
    <scope>PHOSPHORYLATION</scope>
</reference>
<reference key="3">
    <citation type="journal article" date="2008" name="J. Proteome Res.">
        <title>Phosphoproteome analysis of fission yeast.</title>
        <authorList>
            <person name="Wilson-Grady J.T."/>
            <person name="Villen J."/>
            <person name="Gygi S.P."/>
        </authorList>
    </citation>
    <scope>PHOSPHORYLATION [LARGE SCALE ANALYSIS] AT SER-543 AND SER-546</scope>
    <scope>IDENTIFICATION BY MASS SPECTROMETRY</scope>
</reference>
<sequence>MERQRSEEANRRFKDLNPSSLYDNLSKPDLGGSSELHTYMNDTSLADIPLFEDTLASEVSSSLISNPSKNNIQHLHPNTSEPFKTSSKSDEYDSYPRTGNVPTFSFTELNDTSVSGFGSQAVFENSVSPLSNPSNSPQAFDLTQGSSSTHNANDFTVNNVGSRRQSIYEFNIGIPSSNIDSSQFLPVSRAIAASEISPSSSPQLLTSFLPSGSVSNPSSPYLQGSVGALYEADAFNFVDVMSQASGTEVDSERFPSVDFEDPSLLMENQQNITGTGSFADYLQPPSSGSLGAFTNASPGESNTGIDFDTDNTNLNPSVDLLSNHSTPSFIFENSPSAEFSHQSSPYLVPNSGRTLNSENARESTIRSVNSPFSEDHADASLTTHVFDPISPTALSNSVLNYDSNNFSGTPQINVVPSSPSKSQSGPSLPANPLLQTDISITYSQSASPVSGQPAMNENSYDLQNANLCAPEMSPTYTARHRSNSAGSRFDAYEPIPQLYTHFSHSSECLSVNQDTELLGKIENDNSKSNDYLSVRNTRPRSRSLNSLVGNKSENSSSSKAKSESKSQGNYVCTFAGCNKRFTRAYNLKSHMNTHTNYRPFQCSICKKSFARQHDKRRHEQLHTGIKAFACVTCNQRFARMDALNRHYKSEVGQNCLRTATERGIQVPPSRKTAVASTSKQK</sequence>
<protein>
    <recommendedName>
        <fullName>Transcriptional regulator prz1</fullName>
    </recommendedName>
    <alternativeName>
        <fullName>Pbp1-responsive zinc finger protein 1</fullName>
    </alternativeName>
</protein>
<name>PRZ1_SCHPO</name>
<organism>
    <name type="scientific">Schizosaccharomyces pombe (strain 972 / ATCC 24843)</name>
    <name type="common">Fission yeast</name>
    <dbReference type="NCBI Taxonomy" id="284812"/>
    <lineage>
        <taxon>Eukaryota</taxon>
        <taxon>Fungi</taxon>
        <taxon>Dikarya</taxon>
        <taxon>Ascomycota</taxon>
        <taxon>Taphrinomycotina</taxon>
        <taxon>Schizosaccharomycetes</taxon>
        <taxon>Schizosaccharomycetales</taxon>
        <taxon>Schizosaccharomycetaceae</taxon>
        <taxon>Schizosaccharomyces</taxon>
    </lineage>
</organism>